<comment type="similarity">
    <text evidence="1">Belongs to the universal ribosomal protein uS9 family.</text>
</comment>
<name>RS9_CLOB8</name>
<gene>
    <name evidence="1" type="primary">rpsI</name>
    <name type="ordered locus">Cbei_0187</name>
</gene>
<organism>
    <name type="scientific">Clostridium beijerinckii (strain ATCC 51743 / NCIMB 8052)</name>
    <name type="common">Clostridium acetobutylicum</name>
    <dbReference type="NCBI Taxonomy" id="290402"/>
    <lineage>
        <taxon>Bacteria</taxon>
        <taxon>Bacillati</taxon>
        <taxon>Bacillota</taxon>
        <taxon>Clostridia</taxon>
        <taxon>Eubacteriales</taxon>
        <taxon>Clostridiaceae</taxon>
        <taxon>Clostridium</taxon>
    </lineage>
</organism>
<dbReference type="EMBL" id="CP000721">
    <property type="protein sequence ID" value="ABR32377.1"/>
    <property type="molecule type" value="Genomic_DNA"/>
</dbReference>
<dbReference type="RefSeq" id="WP_008426638.1">
    <property type="nucleotide sequence ID" value="NC_009617.1"/>
</dbReference>
<dbReference type="SMR" id="A6LPU7"/>
<dbReference type="GeneID" id="66343077"/>
<dbReference type="KEGG" id="cbe:Cbei_0187"/>
<dbReference type="eggNOG" id="COG0103">
    <property type="taxonomic scope" value="Bacteria"/>
</dbReference>
<dbReference type="HOGENOM" id="CLU_046483_2_1_9"/>
<dbReference type="Proteomes" id="UP000000565">
    <property type="component" value="Chromosome"/>
</dbReference>
<dbReference type="GO" id="GO:0022627">
    <property type="term" value="C:cytosolic small ribosomal subunit"/>
    <property type="evidence" value="ECO:0007669"/>
    <property type="project" value="TreeGrafter"/>
</dbReference>
<dbReference type="GO" id="GO:0003723">
    <property type="term" value="F:RNA binding"/>
    <property type="evidence" value="ECO:0007669"/>
    <property type="project" value="TreeGrafter"/>
</dbReference>
<dbReference type="GO" id="GO:0003735">
    <property type="term" value="F:structural constituent of ribosome"/>
    <property type="evidence" value="ECO:0007669"/>
    <property type="project" value="InterPro"/>
</dbReference>
<dbReference type="GO" id="GO:0006412">
    <property type="term" value="P:translation"/>
    <property type="evidence" value="ECO:0007669"/>
    <property type="project" value="UniProtKB-UniRule"/>
</dbReference>
<dbReference type="FunFam" id="3.30.230.10:FF:000001">
    <property type="entry name" value="30S ribosomal protein S9"/>
    <property type="match status" value="1"/>
</dbReference>
<dbReference type="Gene3D" id="3.30.230.10">
    <property type="match status" value="1"/>
</dbReference>
<dbReference type="HAMAP" id="MF_00532_B">
    <property type="entry name" value="Ribosomal_uS9_B"/>
    <property type="match status" value="1"/>
</dbReference>
<dbReference type="InterPro" id="IPR020568">
    <property type="entry name" value="Ribosomal_Su5_D2-typ_SF"/>
</dbReference>
<dbReference type="InterPro" id="IPR000754">
    <property type="entry name" value="Ribosomal_uS9"/>
</dbReference>
<dbReference type="InterPro" id="IPR023035">
    <property type="entry name" value="Ribosomal_uS9_bac/plastid"/>
</dbReference>
<dbReference type="InterPro" id="IPR020574">
    <property type="entry name" value="Ribosomal_uS9_CS"/>
</dbReference>
<dbReference type="InterPro" id="IPR014721">
    <property type="entry name" value="Ribsml_uS5_D2-typ_fold_subgr"/>
</dbReference>
<dbReference type="NCBIfam" id="NF001099">
    <property type="entry name" value="PRK00132.1"/>
    <property type="match status" value="1"/>
</dbReference>
<dbReference type="PANTHER" id="PTHR21569">
    <property type="entry name" value="RIBOSOMAL PROTEIN S9"/>
    <property type="match status" value="1"/>
</dbReference>
<dbReference type="PANTHER" id="PTHR21569:SF1">
    <property type="entry name" value="SMALL RIBOSOMAL SUBUNIT PROTEIN US9M"/>
    <property type="match status" value="1"/>
</dbReference>
<dbReference type="Pfam" id="PF00380">
    <property type="entry name" value="Ribosomal_S9"/>
    <property type="match status" value="1"/>
</dbReference>
<dbReference type="SUPFAM" id="SSF54211">
    <property type="entry name" value="Ribosomal protein S5 domain 2-like"/>
    <property type="match status" value="1"/>
</dbReference>
<dbReference type="PROSITE" id="PS00360">
    <property type="entry name" value="RIBOSOMAL_S9"/>
    <property type="match status" value="1"/>
</dbReference>
<proteinExistence type="inferred from homology"/>
<keyword id="KW-0687">Ribonucleoprotein</keyword>
<keyword id="KW-0689">Ribosomal protein</keyword>
<sequence>MAKVQYMGTGRRKKSVARVRLVPGSGKVLVNKREIENFFGLETLRVIVNQPLVLTGTKDRFDVLVNVHGGGFTGQAGAIRHGIARALVKSDEALKPELKKAGFLTRDPRMKERKKYGLKAARRAPQFSKR</sequence>
<accession>A6LPU7</accession>
<protein>
    <recommendedName>
        <fullName evidence="1">Small ribosomal subunit protein uS9</fullName>
    </recommendedName>
    <alternativeName>
        <fullName evidence="2">30S ribosomal protein S9</fullName>
    </alternativeName>
</protein>
<evidence type="ECO:0000255" key="1">
    <source>
        <dbReference type="HAMAP-Rule" id="MF_00532"/>
    </source>
</evidence>
<evidence type="ECO:0000305" key="2"/>
<reference key="1">
    <citation type="submission" date="2007-06" db="EMBL/GenBank/DDBJ databases">
        <title>Complete sequence of Clostridium beijerinckii NCIMB 8052.</title>
        <authorList>
            <consortium name="US DOE Joint Genome Institute"/>
            <person name="Copeland A."/>
            <person name="Lucas S."/>
            <person name="Lapidus A."/>
            <person name="Barry K."/>
            <person name="Detter J.C."/>
            <person name="Glavina del Rio T."/>
            <person name="Hammon N."/>
            <person name="Israni S."/>
            <person name="Dalin E."/>
            <person name="Tice H."/>
            <person name="Pitluck S."/>
            <person name="Sims D."/>
            <person name="Brettin T."/>
            <person name="Bruce D."/>
            <person name="Tapia R."/>
            <person name="Brainard J."/>
            <person name="Schmutz J."/>
            <person name="Larimer F."/>
            <person name="Land M."/>
            <person name="Hauser L."/>
            <person name="Kyrpides N."/>
            <person name="Mikhailova N."/>
            <person name="Bennet G."/>
            <person name="Cann I."/>
            <person name="Chen J.-S."/>
            <person name="Contreras A.L."/>
            <person name="Jones D."/>
            <person name="Kashket E."/>
            <person name="Mitchell W."/>
            <person name="Stoddard S."/>
            <person name="Schwarz W."/>
            <person name="Qureshi N."/>
            <person name="Young M."/>
            <person name="Shi Z."/>
            <person name="Ezeji T."/>
            <person name="White B."/>
            <person name="Blaschek H."/>
            <person name="Richardson P."/>
        </authorList>
    </citation>
    <scope>NUCLEOTIDE SEQUENCE [LARGE SCALE GENOMIC DNA]</scope>
    <source>
        <strain>ATCC 51743 / NCIMB 8052</strain>
    </source>
</reference>
<feature type="chain" id="PRO_1000081808" description="Small ribosomal subunit protein uS9">
    <location>
        <begin position="1"/>
        <end position="130"/>
    </location>
</feature>